<name>3BHD1_EGGLE</name>
<comment type="function">
    <text evidence="3">Involved in the modification of secondary bile acids into iso-bile acids (3beta-bile acids) via epimerization of the 3-OH group through a 3-oxo-intermediate. Catalyzes the reduction of 12-alpha-hydroxy-3-oxo-5-beta-cholan-24-oate (3-oxo-DCA) and 3-oxo-5-beta-cholan-24-oate (3-oxo-LCA) to yield isodeoxycholate (isoDCA) and isolithocholate (isoLCA), respectively. Is also able to catalyze the reduction of 3-dehydrocholate (3-oxo-CA or 7alpha,12alpha-dihydroxy-3-oxo-5beta-cholan-24-oate) and 7-alpha-hydroxy-3-oxo-5-beta-cholan-24-oate (3-oxo-CDCA), into isocholate (isoCA) and isochenodeoxycholate (isoCDCA), respectively. Prefers NADH to NADPH as cosubstrate. The conversion of the abundant bile acid deoxycholate (DCA) into isoDCA by the gut bacterium E.lenta favors the growth of the keystone commensal genus Bacteroides, since isoDCA is less cytotoxic than its parent compound, DCA; iso-bile acids have thus a potential role in modulating gut community composition.</text>
</comment>
<comment type="catalytic activity">
    <reaction evidence="3">
        <text>3-oxo-5beta-cholan-24-oate + NADH + H(+) = isolithocholate + NAD(+)</text>
        <dbReference type="Rhea" id="RHEA:47508"/>
        <dbReference type="ChEBI" id="CHEBI:11867"/>
        <dbReference type="ChEBI" id="CHEBI:15378"/>
        <dbReference type="ChEBI" id="CHEBI:57540"/>
        <dbReference type="ChEBI" id="CHEBI:57945"/>
        <dbReference type="ChEBI" id="CHEBI:87728"/>
        <dbReference type="EC" id="1.1.1.391"/>
    </reaction>
    <physiologicalReaction direction="left-to-right" evidence="6">
        <dbReference type="Rhea" id="RHEA:47509"/>
    </physiologicalReaction>
</comment>
<comment type="catalytic activity">
    <reaction evidence="3">
        <text>12alpha-hydroxy-3-oxo-5beta-cholan-24-oate + NADH + H(+) = isodeoxycholate + NAD(+)</text>
        <dbReference type="Rhea" id="RHEA:47492"/>
        <dbReference type="ChEBI" id="CHEBI:15378"/>
        <dbReference type="ChEBI" id="CHEBI:57540"/>
        <dbReference type="ChEBI" id="CHEBI:57945"/>
        <dbReference type="ChEBI" id="CHEBI:87733"/>
        <dbReference type="ChEBI" id="CHEBI:87734"/>
    </reaction>
    <physiologicalReaction direction="left-to-right" evidence="6">
        <dbReference type="Rhea" id="RHEA:47493"/>
    </physiologicalReaction>
</comment>
<comment type="catalytic activity">
    <reaction evidence="3">
        <text>7alpha,12alpha-dihydroxy-3-oxo-5beta-cholan-24-oate + NADH + H(+) = isocholate + NAD(+)</text>
        <dbReference type="Rhea" id="RHEA:47512"/>
        <dbReference type="ChEBI" id="CHEBI:15378"/>
        <dbReference type="ChEBI" id="CHEBI:57540"/>
        <dbReference type="ChEBI" id="CHEBI:57945"/>
        <dbReference type="ChEBI" id="CHEBI:87735"/>
        <dbReference type="ChEBI" id="CHEBI:87736"/>
    </reaction>
    <physiologicalReaction direction="left-to-right" evidence="6">
        <dbReference type="Rhea" id="RHEA:47513"/>
    </physiologicalReaction>
</comment>
<comment type="catalytic activity">
    <reaction evidence="3">
        <text>3-oxochenodeoxycholate + NADH + H(+) = isochenodeoxycholate + NAD(+)</text>
        <dbReference type="Rhea" id="RHEA:47516"/>
        <dbReference type="ChEBI" id="CHEBI:15378"/>
        <dbReference type="ChEBI" id="CHEBI:57540"/>
        <dbReference type="ChEBI" id="CHEBI:57945"/>
        <dbReference type="ChEBI" id="CHEBI:87730"/>
        <dbReference type="ChEBI" id="CHEBI:87731"/>
    </reaction>
    <physiologicalReaction direction="left-to-right" evidence="6">
        <dbReference type="Rhea" id="RHEA:47517"/>
    </physiologicalReaction>
</comment>
<comment type="biophysicochemical properties">
    <kinetics>
        <KM evidence="3">2660 uM for 12alpha-hydroxy-3-oxo-5beta-cholan-24-oate</KM>
        <text evidence="3">kcat is 584 min(-1) with 12alpha-hydroxy-3-oxo-5beta-cholan-24-oate as substrate.</text>
    </kinetics>
</comment>
<comment type="similarity">
    <text evidence="5">Belongs to the short-chain dehydrogenases/reductases (SDR) family.</text>
</comment>
<organism>
    <name type="scientific">Eggerthella lenta (strain ATCC 25559 / DSM 2243 / CCUG 17323 / JCM 9979 / KCTC 3265 / NCTC 11813 / VPI 0255 / 1899 B)</name>
    <name type="common">Eubacterium lentum</name>
    <dbReference type="NCBI Taxonomy" id="479437"/>
    <lineage>
        <taxon>Bacteria</taxon>
        <taxon>Bacillati</taxon>
        <taxon>Actinomycetota</taxon>
        <taxon>Coriobacteriia</taxon>
        <taxon>Eggerthellales</taxon>
        <taxon>Eggerthellaceae</taxon>
        <taxon>Eggerthella</taxon>
    </lineage>
</organism>
<accession>C8WJW0</accession>
<evidence type="ECO:0000250" key="1">
    <source>
        <dbReference type="UniProtKB" id="Q9ZNN8"/>
    </source>
</evidence>
<evidence type="ECO:0000255" key="2">
    <source>
        <dbReference type="PROSITE-ProRule" id="PRU10001"/>
    </source>
</evidence>
<evidence type="ECO:0000269" key="3">
    <source>
    </source>
</evidence>
<evidence type="ECO:0000303" key="4">
    <source>
    </source>
</evidence>
<evidence type="ECO:0000305" key="5"/>
<evidence type="ECO:0000305" key="6">
    <source>
    </source>
</evidence>
<evidence type="ECO:0000312" key="7">
    <source>
        <dbReference type="EMBL" id="ACV54192.1"/>
    </source>
</evidence>
<evidence type="ECO:0000312" key="8">
    <source>
        <dbReference type="Proteomes" id="UP000001377"/>
    </source>
</evidence>
<gene>
    <name evidence="7" type="ordered locus">Elen_0198</name>
</gene>
<feature type="chain" id="PRO_0000443427" description="3beta-hydroxysteroid dehydrogenase 1">
    <location>
        <begin position="1"/>
        <end position="261"/>
    </location>
</feature>
<feature type="active site" description="Proton acceptor" evidence="2">
    <location>
        <position position="158"/>
    </location>
</feature>
<feature type="binding site" evidence="1">
    <location>
        <begin position="65"/>
        <end position="66"/>
    </location>
    <ligand>
        <name>NAD(+)</name>
        <dbReference type="ChEBI" id="CHEBI:57540"/>
    </ligand>
</feature>
<feature type="binding site" evidence="1">
    <location>
        <position position="92"/>
    </location>
    <ligand>
        <name>NAD(+)</name>
        <dbReference type="ChEBI" id="CHEBI:57540"/>
    </ligand>
</feature>
<feature type="binding site" evidence="1">
    <location>
        <position position="158"/>
    </location>
    <ligand>
        <name>NAD(+)</name>
        <dbReference type="ChEBI" id="CHEBI:57540"/>
    </ligand>
</feature>
<feature type="binding site" evidence="1">
    <location>
        <position position="162"/>
    </location>
    <ligand>
        <name>NAD(+)</name>
        <dbReference type="ChEBI" id="CHEBI:57540"/>
    </ligand>
</feature>
<sequence length="261" mass="27644">MYDDLKGKTVVVTGSSKGLGAAMARRFGAEGMNVVANYRSDEEGARETVRAIEEAGGAAAAVQADVSKNECVDALFDAAMFSFGGVDIWVNNAGIEVASPSDRKSIEEWQRVIDVNLTGVFAGCRRAIDHFLDRKMPGVIINLSSVHEIIPWPHFADYAASKAGVGMLTKTLALEYADRGIRVNAIAPGAMNTPINAEKFADPEARAATERLIPMGYVGAPEDVAAAAAWLASDQASYVTGTTLFVDGGMTLYPGFQFGQG</sequence>
<reference key="1">
    <citation type="journal article" date="2009" name="Stand. Genomic Sci.">
        <title>Complete genome sequence of Eggerthella lenta type strain (IPP VPI 0255).</title>
        <authorList>
            <person name="Saunders E."/>
            <person name="Pukall R."/>
            <person name="Abt B."/>
            <person name="Lapidus A."/>
            <person name="Glavina Del Rio T."/>
            <person name="Copeland A."/>
            <person name="Tice H."/>
            <person name="Cheng J.F."/>
            <person name="Lucas S."/>
            <person name="Chen F."/>
            <person name="Nolan M."/>
            <person name="Bruce D."/>
            <person name="Goodwin L."/>
            <person name="Pitluck S."/>
            <person name="Ivanova N."/>
            <person name="Mavromatis K."/>
            <person name="Ovchinnikova G."/>
            <person name="Pati A."/>
            <person name="Chen A."/>
            <person name="Palaniappan K."/>
            <person name="Land M."/>
            <person name="Hauser L."/>
            <person name="Chang Y.J."/>
            <person name="Jeffries C.D."/>
            <person name="Chain P."/>
            <person name="Meincke L."/>
            <person name="Sims D."/>
            <person name="Brettin T."/>
            <person name="Detter J.C."/>
            <person name="Goker M."/>
            <person name="Bristow J."/>
            <person name="Eisen J.A."/>
            <person name="Markowitz V."/>
            <person name="Hugenholtz P."/>
            <person name="Kyrpides N.C."/>
            <person name="Klenk H.P."/>
            <person name="Han C."/>
        </authorList>
    </citation>
    <scope>NUCLEOTIDE SEQUENCE [LARGE SCALE GENOMIC DNA]</scope>
    <source>
        <strain evidence="8">ATCC 25559 / DSM 2243 / CCUG 17323 / JCM 9979 / KCTC 3265 / NCTC 11813 / VPI 0255 / 1899 B</strain>
    </source>
</reference>
<reference key="2">
    <citation type="journal article" date="2015" name="Nat. Chem. Biol.">
        <title>A biosynthetic pathway for a prominent class of microbiota-derived bile acids.</title>
        <authorList>
            <person name="Devlin A.S."/>
            <person name="Fischbach M.A."/>
        </authorList>
    </citation>
    <scope>FUNCTION</scope>
    <scope>CATALYTIC ACTIVITY</scope>
    <scope>BIOPHYSICOCHEMICAL PROPERTIES</scope>
    <scope>SUBSTRATE SPECIFICITY</scope>
    <source>
        <strain>ATCC 25559 / DSM 2243 / CCUG 17323 / JCM 9979 / KCTC 3265 / NCTC 11813 / VPI 0255 / 1899 B</strain>
    </source>
</reference>
<proteinExistence type="evidence at protein level"/>
<dbReference type="EC" id="1.1.1.-" evidence="3"/>
<dbReference type="EC" id="1.1.1.391" evidence="3"/>
<dbReference type="EMBL" id="CP001726">
    <property type="protein sequence ID" value="ACV54192.1"/>
    <property type="molecule type" value="Genomic_DNA"/>
</dbReference>
<dbReference type="RefSeq" id="WP_015759877.1">
    <property type="nucleotide sequence ID" value="NC_013204.1"/>
</dbReference>
<dbReference type="SMR" id="C8WJW0"/>
<dbReference type="STRING" id="479437.Elen_0198"/>
<dbReference type="SwissLipids" id="SLP:000001342"/>
<dbReference type="PaxDb" id="479437-Elen_0198"/>
<dbReference type="KEGG" id="ele:Elen_0198"/>
<dbReference type="eggNOG" id="COG1028">
    <property type="taxonomic scope" value="Bacteria"/>
</dbReference>
<dbReference type="HOGENOM" id="CLU_010194_1_3_11"/>
<dbReference type="OrthoDB" id="9808187at2"/>
<dbReference type="BioCyc" id="ELEN479437:G1GFY-208-MONOMER"/>
<dbReference type="BioCyc" id="MetaCyc:MONOMER-19699"/>
<dbReference type="BRENDA" id="1.1.1.391">
    <property type="organism ID" value="2185"/>
</dbReference>
<dbReference type="Proteomes" id="UP000001377">
    <property type="component" value="Chromosome"/>
</dbReference>
<dbReference type="GO" id="GO:0016491">
    <property type="term" value="F:oxidoreductase activity"/>
    <property type="evidence" value="ECO:0007669"/>
    <property type="project" value="UniProtKB-KW"/>
</dbReference>
<dbReference type="GO" id="GO:0008202">
    <property type="term" value="P:steroid metabolic process"/>
    <property type="evidence" value="ECO:0007669"/>
    <property type="project" value="UniProtKB-KW"/>
</dbReference>
<dbReference type="FunFam" id="3.40.50.720:FF:000084">
    <property type="entry name" value="Short-chain dehydrogenase reductase"/>
    <property type="match status" value="1"/>
</dbReference>
<dbReference type="Gene3D" id="3.40.50.720">
    <property type="entry name" value="NAD(P)-binding Rossmann-like Domain"/>
    <property type="match status" value="1"/>
</dbReference>
<dbReference type="InterPro" id="IPR036291">
    <property type="entry name" value="NAD(P)-bd_dom_sf"/>
</dbReference>
<dbReference type="InterPro" id="IPR020904">
    <property type="entry name" value="Sc_DH/Rdtase_CS"/>
</dbReference>
<dbReference type="InterPro" id="IPR002347">
    <property type="entry name" value="SDR_fam"/>
</dbReference>
<dbReference type="NCBIfam" id="NF005559">
    <property type="entry name" value="PRK07231.1"/>
    <property type="match status" value="1"/>
</dbReference>
<dbReference type="PANTHER" id="PTHR43639">
    <property type="entry name" value="OXIDOREDUCTASE, SHORT-CHAIN DEHYDROGENASE/REDUCTASE FAMILY (AFU_ORTHOLOGUE AFUA_5G02870)"/>
    <property type="match status" value="1"/>
</dbReference>
<dbReference type="PANTHER" id="PTHR43639:SF1">
    <property type="entry name" value="SHORT-CHAIN DEHYDROGENASE_REDUCTASE FAMILY PROTEIN"/>
    <property type="match status" value="1"/>
</dbReference>
<dbReference type="Pfam" id="PF13561">
    <property type="entry name" value="adh_short_C2"/>
    <property type="match status" value="1"/>
</dbReference>
<dbReference type="PRINTS" id="PR00081">
    <property type="entry name" value="GDHRDH"/>
</dbReference>
<dbReference type="PRINTS" id="PR00080">
    <property type="entry name" value="SDRFAMILY"/>
</dbReference>
<dbReference type="SUPFAM" id="SSF51735">
    <property type="entry name" value="NAD(P)-binding Rossmann-fold domains"/>
    <property type="match status" value="1"/>
</dbReference>
<dbReference type="PROSITE" id="PS00061">
    <property type="entry name" value="ADH_SHORT"/>
    <property type="match status" value="1"/>
</dbReference>
<keyword id="KW-0443">Lipid metabolism</keyword>
<keyword id="KW-0520">NAD</keyword>
<keyword id="KW-0560">Oxidoreductase</keyword>
<keyword id="KW-1185">Reference proteome</keyword>
<keyword id="KW-0753">Steroid metabolism</keyword>
<protein>
    <recommendedName>
        <fullName evidence="4">3beta-hydroxysteroid dehydrogenase 1</fullName>
        <shortName evidence="4">3beta-HSDH 1</shortName>
        <ecNumber evidence="3">1.1.1.-</ecNumber>
    </recommendedName>
    <alternativeName>
        <fullName>3beta-hydroxycholanate 3-dehydrogenase (NAD(+)) 1</fullName>
        <ecNumber evidence="3">1.1.1.391</ecNumber>
    </alternativeName>
    <alternativeName>
        <fullName evidence="5">NAD-dependent bile acid 3beta-dehydrogenase</fullName>
    </alternativeName>
</protein>